<accession>A1UTD3</accession>
<evidence type="ECO:0000255" key="1">
    <source>
        <dbReference type="HAMAP-Rule" id="MF_01007"/>
    </source>
</evidence>
<comment type="function">
    <text evidence="1">Specifically methylates the N4 position of cytidine in position 1402 (C1402) of 16S rRNA.</text>
</comment>
<comment type="catalytic activity">
    <reaction evidence="1">
        <text>cytidine(1402) in 16S rRNA + S-adenosyl-L-methionine = N(4)-methylcytidine(1402) in 16S rRNA + S-adenosyl-L-homocysteine + H(+)</text>
        <dbReference type="Rhea" id="RHEA:42928"/>
        <dbReference type="Rhea" id="RHEA-COMP:10286"/>
        <dbReference type="Rhea" id="RHEA-COMP:10287"/>
        <dbReference type="ChEBI" id="CHEBI:15378"/>
        <dbReference type="ChEBI" id="CHEBI:57856"/>
        <dbReference type="ChEBI" id="CHEBI:59789"/>
        <dbReference type="ChEBI" id="CHEBI:74506"/>
        <dbReference type="ChEBI" id="CHEBI:82748"/>
        <dbReference type="EC" id="2.1.1.199"/>
    </reaction>
</comment>
<comment type="subcellular location">
    <subcellularLocation>
        <location evidence="1">Cytoplasm</location>
    </subcellularLocation>
</comment>
<comment type="similarity">
    <text evidence="1">Belongs to the methyltransferase superfamily. RsmH family.</text>
</comment>
<name>RSMH_BARBK</name>
<gene>
    <name evidence="1" type="primary">rsmH</name>
    <name type="synonym">mraW</name>
    <name type="ordered locus">BARBAKC583_0955</name>
</gene>
<proteinExistence type="inferred from homology"/>
<reference key="1">
    <citation type="submission" date="2006-12" db="EMBL/GenBank/DDBJ databases">
        <authorList>
            <person name="Hendrix L."/>
            <person name="Mohamoud Y."/>
            <person name="Radune D."/>
            <person name="Shvartsbeyn A."/>
            <person name="Daugherty S."/>
            <person name="Dodson R."/>
            <person name="Durkin A.S."/>
            <person name="Harkins D."/>
            <person name="Huot H."/>
            <person name="Kothari S.P."/>
            <person name="Madupu R."/>
            <person name="Li J."/>
            <person name="Nelson W.C."/>
            <person name="Shrivastava S."/>
            <person name="Giglio M.G."/>
            <person name="Haft D."/>
            <person name="Selengut J."/>
            <person name="Fraser-Ligget C."/>
            <person name="Seshadri R."/>
        </authorList>
    </citation>
    <scope>NUCLEOTIDE SEQUENCE [LARGE SCALE GENOMIC DNA]</scope>
    <source>
        <strain>ATCC 35685 / KC583 / Herrer 020/F12,63</strain>
    </source>
</reference>
<sequence length="331" mass="37102">MIERDNGTKRHIPVLLEPVLAGLAPLSGATVIDGTFGAGGYTRALLNAGANVTALDRDPHAIREGKPLVDQFFPRLRLVQTEFSQLDRVIEEKVDAVILDIGVSSMQLDEAERGFSFQKDGPLDMRMAQTGLSASDVVNHLKIDDLIQIFRILGEERHSSRIAKMIEKRRRIRPFLRTRDLAHEIEVLIGRKPGDRIHPATRVFQALRIYVNDELNELTRGLFAAERVLKAGGRLGVVSFHSLEDRIVKKFFSFCSGNRKGSRYLPEVESAPATFFPLFKGGKTASEEELQKNPRARSARLRIGIRTQVDAMEADMKLFGLKEIANFESNK</sequence>
<protein>
    <recommendedName>
        <fullName evidence="1">Ribosomal RNA small subunit methyltransferase H</fullName>
        <ecNumber evidence="1">2.1.1.199</ecNumber>
    </recommendedName>
    <alternativeName>
        <fullName evidence="1">16S rRNA m(4)C1402 methyltransferase</fullName>
    </alternativeName>
    <alternativeName>
        <fullName evidence="1">rRNA (cytosine-N(4)-)-methyltransferase RsmH</fullName>
    </alternativeName>
</protein>
<organism>
    <name type="scientific">Bartonella bacilliformis (strain ATCC 35685 / KC583 / Herrer 020/F12,63)</name>
    <dbReference type="NCBI Taxonomy" id="360095"/>
    <lineage>
        <taxon>Bacteria</taxon>
        <taxon>Pseudomonadati</taxon>
        <taxon>Pseudomonadota</taxon>
        <taxon>Alphaproteobacteria</taxon>
        <taxon>Hyphomicrobiales</taxon>
        <taxon>Bartonellaceae</taxon>
        <taxon>Bartonella</taxon>
    </lineage>
</organism>
<dbReference type="EC" id="2.1.1.199" evidence="1"/>
<dbReference type="EMBL" id="CP000524">
    <property type="protein sequence ID" value="ABM44859.1"/>
    <property type="molecule type" value="Genomic_DNA"/>
</dbReference>
<dbReference type="RefSeq" id="WP_005767445.1">
    <property type="nucleotide sequence ID" value="NC_008783.1"/>
</dbReference>
<dbReference type="SMR" id="A1UTD3"/>
<dbReference type="STRING" id="360095.BARBAKC583_0955"/>
<dbReference type="GeneID" id="4683907"/>
<dbReference type="KEGG" id="bbk:BARBAKC583_0955"/>
<dbReference type="PATRIC" id="fig|360095.6.peg.926"/>
<dbReference type="eggNOG" id="COG0275">
    <property type="taxonomic scope" value="Bacteria"/>
</dbReference>
<dbReference type="HOGENOM" id="CLU_038422_1_1_5"/>
<dbReference type="OrthoDB" id="9806637at2"/>
<dbReference type="Proteomes" id="UP000000643">
    <property type="component" value="Chromosome"/>
</dbReference>
<dbReference type="GO" id="GO:0005737">
    <property type="term" value="C:cytoplasm"/>
    <property type="evidence" value="ECO:0007669"/>
    <property type="project" value="UniProtKB-SubCell"/>
</dbReference>
<dbReference type="GO" id="GO:0071424">
    <property type="term" value="F:rRNA (cytosine-N4-)-methyltransferase activity"/>
    <property type="evidence" value="ECO:0007669"/>
    <property type="project" value="UniProtKB-UniRule"/>
</dbReference>
<dbReference type="GO" id="GO:0070475">
    <property type="term" value="P:rRNA base methylation"/>
    <property type="evidence" value="ECO:0007669"/>
    <property type="project" value="UniProtKB-UniRule"/>
</dbReference>
<dbReference type="CDD" id="cd02440">
    <property type="entry name" value="AdoMet_MTases"/>
    <property type="match status" value="1"/>
</dbReference>
<dbReference type="Gene3D" id="1.10.150.170">
    <property type="entry name" value="Putative methyltransferase TM0872, insert domain"/>
    <property type="match status" value="1"/>
</dbReference>
<dbReference type="Gene3D" id="3.40.50.150">
    <property type="entry name" value="Vaccinia Virus protein VP39"/>
    <property type="match status" value="1"/>
</dbReference>
<dbReference type="HAMAP" id="MF_01007">
    <property type="entry name" value="16SrRNA_methyltr_H"/>
    <property type="match status" value="1"/>
</dbReference>
<dbReference type="InterPro" id="IPR002903">
    <property type="entry name" value="RsmH"/>
</dbReference>
<dbReference type="InterPro" id="IPR023397">
    <property type="entry name" value="SAM-dep_MeTrfase_MraW_recog"/>
</dbReference>
<dbReference type="InterPro" id="IPR029063">
    <property type="entry name" value="SAM-dependent_MTases_sf"/>
</dbReference>
<dbReference type="NCBIfam" id="TIGR00006">
    <property type="entry name" value="16S rRNA (cytosine(1402)-N(4))-methyltransferase RsmH"/>
    <property type="match status" value="1"/>
</dbReference>
<dbReference type="PANTHER" id="PTHR11265:SF0">
    <property type="entry name" value="12S RRNA N4-METHYLCYTIDINE METHYLTRANSFERASE"/>
    <property type="match status" value="1"/>
</dbReference>
<dbReference type="PANTHER" id="PTHR11265">
    <property type="entry name" value="S-ADENOSYL-METHYLTRANSFERASE MRAW"/>
    <property type="match status" value="1"/>
</dbReference>
<dbReference type="Pfam" id="PF01795">
    <property type="entry name" value="Methyltransf_5"/>
    <property type="match status" value="1"/>
</dbReference>
<dbReference type="PIRSF" id="PIRSF004486">
    <property type="entry name" value="MraW"/>
    <property type="match status" value="1"/>
</dbReference>
<dbReference type="SUPFAM" id="SSF81799">
    <property type="entry name" value="Putative methyltransferase TM0872, insert domain"/>
    <property type="match status" value="1"/>
</dbReference>
<dbReference type="SUPFAM" id="SSF53335">
    <property type="entry name" value="S-adenosyl-L-methionine-dependent methyltransferases"/>
    <property type="match status" value="1"/>
</dbReference>
<keyword id="KW-0963">Cytoplasm</keyword>
<keyword id="KW-0489">Methyltransferase</keyword>
<keyword id="KW-0698">rRNA processing</keyword>
<keyword id="KW-0949">S-adenosyl-L-methionine</keyword>
<keyword id="KW-0808">Transferase</keyword>
<feature type="chain" id="PRO_0000386739" description="Ribosomal RNA small subunit methyltransferase H">
    <location>
        <begin position="1"/>
        <end position="331"/>
    </location>
</feature>
<feature type="binding site" evidence="1">
    <location>
        <begin position="39"/>
        <end position="41"/>
    </location>
    <ligand>
        <name>S-adenosyl-L-methionine</name>
        <dbReference type="ChEBI" id="CHEBI:59789"/>
    </ligand>
</feature>
<feature type="binding site" evidence="1">
    <location>
        <position position="56"/>
    </location>
    <ligand>
        <name>S-adenosyl-L-methionine</name>
        <dbReference type="ChEBI" id="CHEBI:59789"/>
    </ligand>
</feature>
<feature type="binding site" evidence="1">
    <location>
        <position position="83"/>
    </location>
    <ligand>
        <name>S-adenosyl-L-methionine</name>
        <dbReference type="ChEBI" id="CHEBI:59789"/>
    </ligand>
</feature>
<feature type="binding site" evidence="1">
    <location>
        <position position="100"/>
    </location>
    <ligand>
        <name>S-adenosyl-L-methionine</name>
        <dbReference type="ChEBI" id="CHEBI:59789"/>
    </ligand>
</feature>
<feature type="binding site" evidence="1">
    <location>
        <position position="107"/>
    </location>
    <ligand>
        <name>S-adenosyl-L-methionine</name>
        <dbReference type="ChEBI" id="CHEBI:59789"/>
    </ligand>
</feature>